<evidence type="ECO:0000250" key="1"/>
<evidence type="ECO:0000255" key="2">
    <source>
        <dbReference type="PROSITE-ProRule" id="PRU00362"/>
    </source>
</evidence>
<evidence type="ECO:0000255" key="3">
    <source>
        <dbReference type="PROSITE-ProRule" id="PRU00434"/>
    </source>
</evidence>
<evidence type="ECO:0000255" key="4">
    <source>
        <dbReference type="PROSITE-ProRule" id="PRU00441"/>
    </source>
</evidence>
<evidence type="ECO:0000305" key="5"/>
<proteinExistence type="inferred from homology"/>
<sequence length="708" mass="79698">MEANHQRNDLGLVALTMLAQYHNISLNPEEIKHKFDLDGKGLSLTSWLLAAKSLALKAKHIKKEISRLHLVNLPALVWQDNGKHFLLVKVDTDNNRYLTYNLEQDAPQILSQDEFEACYQGQLILVTSRASVVGQLAKFDFTWFIPAVIKYRKIFLETLIVSIFLQIFALITPLFFQVVMDKVLVHRGFSTLNIITVALAIVIIFEIVLSGLRTYVFSHSTSRIDVELGAKLFRHLLSLPISYFENRRVGDTVARVRELDQIRNFLTGQALTSVLDLLFSFIFFAVMWYYSPKLTLVILGSLPCYILWSIFISPILRRRLDDKFARSADNQAFLVESVTAINMIKAMAVAPQMTDTWDKQLASYVSSSFRVTVLATIGQQGVQLIQKTVMVINLWLGAHLVISGDLSIGQLIAFNMLSGQVIAPVIRLAQLWQDFQQVGISVTRLGDVLNSPTEQYQGKLSLPEIKGDISFKNIRFRYKPDAPTILNNVNLEIRQGEVIGIVGRSGSGKSTLTKLLQRFYIPENGQVLIDGHDLALADPNWLRRQIGVVLQDNVLLNRSIRENIALSDPGMPMERVIYAAKLAGAHDFISELREGYNTIVGEQGAGLSGGQRQRIAIARALVNNPKILIFDEATSALDYQSEHIIMQNMQKICQGRTVILIAHRLSTVKNADRIIVMEKGEIVEQGKHHELLQNSNGLYSYLHQLQLN</sequence>
<name>LKB16_MANHA</name>
<reference key="1">
    <citation type="journal article" date="2002" name="J. Bacteriol.">
        <title>Mosaic structure and molecular evolution of the leukotoxin operon (lktCABD) in Mannheimia (Pasteurella) haemolytica, Mannheimia glucosida, and Pasteurella trehalosi.</title>
        <authorList>
            <person name="Davies R.L."/>
            <person name="Campbell S."/>
            <person name="Whittam T.S."/>
        </authorList>
    </citation>
    <scope>NUCLEOTIDE SEQUENCE [GENOMIC DNA]</scope>
    <source>
        <strain>Serotype A16 / PH706</strain>
    </source>
</reference>
<accession>Q93FH3</accession>
<keyword id="KW-0067">ATP-binding</keyword>
<keyword id="KW-0997">Cell inner membrane</keyword>
<keyword id="KW-1003">Cell membrane</keyword>
<keyword id="KW-0472">Membrane</keyword>
<keyword id="KW-0547">Nucleotide-binding</keyword>
<keyword id="KW-1278">Translocase</keyword>
<keyword id="KW-0812">Transmembrane</keyword>
<keyword id="KW-1133">Transmembrane helix</keyword>
<keyword id="KW-0813">Transport</keyword>
<comment type="function">
    <text evidence="5">Part of the ABC transporter complex LktBD involved in leukotoxin export. Transmembrane domains (TMD) form a pore in the inner membrane and the ATP-binding domain (NBD) is responsible for energy generation (Probable).</text>
</comment>
<comment type="catalytic activity">
    <reaction>
        <text>ATP + H2O + proteinSide 1 = ADP + phosphate + proteinSide 2.</text>
        <dbReference type="EC" id="7.4.2.5"/>
    </reaction>
</comment>
<comment type="subunit">
    <text evidence="1">Homodimer.</text>
</comment>
<comment type="subcellular location">
    <subcellularLocation>
        <location evidence="5">Cell inner membrane</location>
        <topology evidence="5">Multi-pass membrane protein</topology>
    </subcellularLocation>
</comment>
<comment type="domain">
    <text>In LktB the peptidase C39 domain, the ATP-binding domain (NBD) and the transmembrane domain (TMD) are fused.</text>
</comment>
<comment type="similarity">
    <text evidence="5">Belongs to the ABC transporter superfamily. Protein-1 exporter (TC 3.A.1.109) family.</text>
</comment>
<comment type="caution">
    <text evidence="5">Leu-10 is present instead of the conserved Cys which is expected to be the active site residue of peptidase C39. Thus this protein is presumed to be without peptidase activity.</text>
</comment>
<gene>
    <name type="primary">lktB</name>
</gene>
<organism>
    <name type="scientific">Mannheimia haemolytica</name>
    <name type="common">Pasteurella haemolytica</name>
    <dbReference type="NCBI Taxonomy" id="75985"/>
    <lineage>
        <taxon>Bacteria</taxon>
        <taxon>Pseudomonadati</taxon>
        <taxon>Pseudomonadota</taxon>
        <taxon>Gammaproteobacteria</taxon>
        <taxon>Pasteurellales</taxon>
        <taxon>Pasteurellaceae</taxon>
        <taxon>Mannheimia</taxon>
    </lineage>
</organism>
<dbReference type="EC" id="7.4.2.5"/>
<dbReference type="EMBL" id="AF314509">
    <property type="protein sequence ID" value="AAL12776.1"/>
    <property type="molecule type" value="Genomic_DNA"/>
</dbReference>
<dbReference type="SMR" id="Q93FH3"/>
<dbReference type="GO" id="GO:0005886">
    <property type="term" value="C:plasma membrane"/>
    <property type="evidence" value="ECO:0007669"/>
    <property type="project" value="UniProtKB-SubCell"/>
</dbReference>
<dbReference type="GO" id="GO:0030256">
    <property type="term" value="C:type I protein secretion system complex"/>
    <property type="evidence" value="ECO:0007669"/>
    <property type="project" value="InterPro"/>
</dbReference>
<dbReference type="GO" id="GO:0140359">
    <property type="term" value="F:ABC-type transporter activity"/>
    <property type="evidence" value="ECO:0007669"/>
    <property type="project" value="InterPro"/>
</dbReference>
<dbReference type="GO" id="GO:0005524">
    <property type="term" value="F:ATP binding"/>
    <property type="evidence" value="ECO:0007669"/>
    <property type="project" value="UniProtKB-KW"/>
</dbReference>
<dbReference type="GO" id="GO:0016887">
    <property type="term" value="F:ATP hydrolysis activity"/>
    <property type="evidence" value="ECO:0007669"/>
    <property type="project" value="InterPro"/>
</dbReference>
<dbReference type="GO" id="GO:0034040">
    <property type="term" value="F:ATPase-coupled lipid transmembrane transporter activity"/>
    <property type="evidence" value="ECO:0007669"/>
    <property type="project" value="TreeGrafter"/>
</dbReference>
<dbReference type="GO" id="GO:0030253">
    <property type="term" value="P:protein secretion by the type I secretion system"/>
    <property type="evidence" value="ECO:0007669"/>
    <property type="project" value="InterPro"/>
</dbReference>
<dbReference type="GO" id="GO:0006508">
    <property type="term" value="P:proteolysis"/>
    <property type="evidence" value="ECO:0007669"/>
    <property type="project" value="InterPro"/>
</dbReference>
<dbReference type="CDD" id="cd18588">
    <property type="entry name" value="ABC_6TM_CyaB_HlyB_like"/>
    <property type="match status" value="1"/>
</dbReference>
<dbReference type="CDD" id="cd03252">
    <property type="entry name" value="ABCC_Hemolysin"/>
    <property type="match status" value="1"/>
</dbReference>
<dbReference type="CDD" id="cd02417">
    <property type="entry name" value="Peptidase_C39_likeA"/>
    <property type="match status" value="1"/>
</dbReference>
<dbReference type="FunFam" id="3.40.50.300:FF:000299">
    <property type="entry name" value="ABC transporter ATP-binding protein/permease"/>
    <property type="match status" value="1"/>
</dbReference>
<dbReference type="FunFam" id="1.20.1560.10:FF:000056">
    <property type="entry name" value="Alpha-hemolysin translocation ATP-binding protein HlyB"/>
    <property type="match status" value="1"/>
</dbReference>
<dbReference type="Gene3D" id="1.20.1560.10">
    <property type="entry name" value="ABC transporter type 1, transmembrane domain"/>
    <property type="match status" value="1"/>
</dbReference>
<dbReference type="Gene3D" id="3.90.70.10">
    <property type="entry name" value="Cysteine proteinases"/>
    <property type="match status" value="1"/>
</dbReference>
<dbReference type="Gene3D" id="3.40.50.300">
    <property type="entry name" value="P-loop containing nucleotide triphosphate hydrolases"/>
    <property type="match status" value="1"/>
</dbReference>
<dbReference type="InterPro" id="IPR003593">
    <property type="entry name" value="AAA+_ATPase"/>
</dbReference>
<dbReference type="InterPro" id="IPR011527">
    <property type="entry name" value="ABC1_TM_dom"/>
</dbReference>
<dbReference type="InterPro" id="IPR036640">
    <property type="entry name" value="ABC1_TM_sf"/>
</dbReference>
<dbReference type="InterPro" id="IPR003439">
    <property type="entry name" value="ABC_transporter-like_ATP-bd"/>
</dbReference>
<dbReference type="InterPro" id="IPR017871">
    <property type="entry name" value="ABC_transporter-like_CS"/>
</dbReference>
<dbReference type="InterPro" id="IPR010132">
    <property type="entry name" value="ATPase_T1SS_HlyB"/>
</dbReference>
<dbReference type="InterPro" id="IPR027417">
    <property type="entry name" value="P-loop_NTPase"/>
</dbReference>
<dbReference type="InterPro" id="IPR005074">
    <property type="entry name" value="Peptidase_C39"/>
</dbReference>
<dbReference type="InterPro" id="IPR039395">
    <property type="entry name" value="Peptidase_C39-like_A"/>
</dbReference>
<dbReference type="InterPro" id="IPR039421">
    <property type="entry name" value="Type_1_exporter"/>
</dbReference>
<dbReference type="NCBIfam" id="TIGR01846">
    <property type="entry name" value="type_I_sec_HlyB"/>
    <property type="match status" value="1"/>
</dbReference>
<dbReference type="PANTHER" id="PTHR24221">
    <property type="entry name" value="ATP-BINDING CASSETTE SUB-FAMILY B"/>
    <property type="match status" value="1"/>
</dbReference>
<dbReference type="PANTHER" id="PTHR24221:SF647">
    <property type="entry name" value="BLL6336 PROTEIN"/>
    <property type="match status" value="1"/>
</dbReference>
<dbReference type="Pfam" id="PF00664">
    <property type="entry name" value="ABC_membrane"/>
    <property type="match status" value="1"/>
</dbReference>
<dbReference type="Pfam" id="PF00005">
    <property type="entry name" value="ABC_tran"/>
    <property type="match status" value="1"/>
</dbReference>
<dbReference type="Pfam" id="PF03412">
    <property type="entry name" value="Peptidase_C39"/>
    <property type="match status" value="1"/>
</dbReference>
<dbReference type="SMART" id="SM00382">
    <property type="entry name" value="AAA"/>
    <property type="match status" value="1"/>
</dbReference>
<dbReference type="SUPFAM" id="SSF90123">
    <property type="entry name" value="ABC transporter transmembrane region"/>
    <property type="match status" value="1"/>
</dbReference>
<dbReference type="SUPFAM" id="SSF52540">
    <property type="entry name" value="P-loop containing nucleoside triphosphate hydrolases"/>
    <property type="match status" value="1"/>
</dbReference>
<dbReference type="PROSITE" id="PS50929">
    <property type="entry name" value="ABC_TM1F"/>
    <property type="match status" value="1"/>
</dbReference>
<dbReference type="PROSITE" id="PS00211">
    <property type="entry name" value="ABC_TRANSPORTER_1"/>
    <property type="match status" value="1"/>
</dbReference>
<dbReference type="PROSITE" id="PS50893">
    <property type="entry name" value="ABC_TRANSPORTER_2"/>
    <property type="match status" value="1"/>
</dbReference>
<dbReference type="PROSITE" id="PS50990">
    <property type="entry name" value="PEPTIDASE_C39"/>
    <property type="match status" value="1"/>
</dbReference>
<protein>
    <recommendedName>
        <fullName>Leukotoxin translocation ATP-binding protein LktB</fullName>
        <ecNumber>7.4.2.5</ecNumber>
    </recommendedName>
</protein>
<feature type="chain" id="PRO_0000092386" description="Leukotoxin translocation ATP-binding protein LktB">
    <location>
        <begin position="1"/>
        <end position="708"/>
    </location>
</feature>
<feature type="transmembrane region" description="Helical" evidence="4">
    <location>
        <begin position="159"/>
        <end position="179"/>
    </location>
</feature>
<feature type="transmembrane region" description="Helical" evidence="4">
    <location>
        <begin position="192"/>
        <end position="212"/>
    </location>
</feature>
<feature type="transmembrane region" description="Helical" evidence="4">
    <location>
        <begin position="270"/>
        <end position="290"/>
    </location>
</feature>
<feature type="transmembrane region" description="Helical" evidence="4">
    <location>
        <begin position="296"/>
        <end position="316"/>
    </location>
</feature>
<feature type="transmembrane region" description="Helical" evidence="4">
    <location>
        <begin position="389"/>
        <end position="409"/>
    </location>
</feature>
<feature type="domain" description="Peptidase C39" evidence="2">
    <location>
        <begin position="1"/>
        <end position="126"/>
    </location>
</feature>
<feature type="domain" description="ABC transmembrane type-1" evidence="4">
    <location>
        <begin position="155"/>
        <end position="437"/>
    </location>
</feature>
<feature type="domain" description="ABC transporter" evidence="2 3">
    <location>
        <begin position="469"/>
        <end position="704"/>
    </location>
</feature>
<feature type="binding site" evidence="2 3">
    <location>
        <begin position="503"/>
        <end position="510"/>
    </location>
    <ligand>
        <name>ATP</name>
        <dbReference type="ChEBI" id="CHEBI:30616"/>
    </ligand>
</feature>